<reference key="1">
    <citation type="journal article" date="1990" name="Gene">
        <title>Cloning and characterization of the Bacillus sphaericus genes controlling the bioconversion of pimelate into dethiobiotin.</title>
        <authorList>
            <person name="Gloeckler R."/>
            <person name="Ohsawa I."/>
            <person name="Speck D."/>
            <person name="Ledoux C."/>
            <person name="Bernard S."/>
            <person name="Zinsius M."/>
            <person name="Villeval D."/>
            <person name="Kisou T."/>
            <person name="Kamogawa K."/>
            <person name="Lemoine Y."/>
        </authorList>
    </citation>
    <scope>NUCLEOTIDE SEQUENCE [GENOMIC DNA]</scope>
    <source>
        <strain>ATCC 10208 / DSM 5019 / NBRC 3525 / NCIMB 11935 / NRS 966 / 1911</strain>
    </source>
</reference>
<reference key="2">
    <citation type="journal article" date="1992" name="Biochem. J.">
        <title>Investigation of the first step of biotin biosynthesis in Bacillus sphaericus. Purification and characterization of the pimeloyl-CoA synthase, and uptake of pimelate.</title>
        <authorList>
            <person name="Ploux O."/>
            <person name="Soularue P."/>
            <person name="Marquet A."/>
            <person name="Gloeckler R."/>
            <person name="Lemoine Y."/>
        </authorList>
    </citation>
    <scope>PROTEIN SEQUENCE OF 1-15</scope>
    <scope>FUNCTION AS A PIMELOYL-COA SYNTHASE</scope>
    <scope>CATALYTIC ACTIVITY</scope>
    <scope>ACTIVITY REGULATION</scope>
    <scope>BIOPHYSICOCHEMICAL PROPERTIES</scope>
    <scope>SUBSTRATE SPECIFICITY</scope>
    <scope>COFACTOR</scope>
    <scope>SUBUNIT</scope>
    <source>
        <strain>ATCC 10208 / DSM 5019 / NBRC 3525 / NCIMB 11935 / NRS 966 / 1911</strain>
    </source>
</reference>
<organism>
    <name type="scientific">Lysinibacillus sphaericus</name>
    <name type="common">Bacillus sphaericus</name>
    <dbReference type="NCBI Taxonomy" id="1421"/>
    <lineage>
        <taxon>Bacteria</taxon>
        <taxon>Bacillati</taxon>
        <taxon>Bacillota</taxon>
        <taxon>Bacilli</taxon>
        <taxon>Bacillales</taxon>
        <taxon>Bacillaceae</taxon>
        <taxon>Lysinibacillus</taxon>
    </lineage>
</organism>
<keyword id="KW-0067">ATP-binding</keyword>
<keyword id="KW-0093">Biotin biosynthesis</keyword>
<keyword id="KW-0903">Direct protein sequencing</keyword>
<keyword id="KW-0436">Ligase</keyword>
<keyword id="KW-0460">Magnesium</keyword>
<keyword id="KW-0547">Nucleotide-binding</keyword>
<evidence type="ECO:0000250" key="1"/>
<evidence type="ECO:0000269" key="2">
    <source>
    </source>
</evidence>
<evidence type="ECO:0000305" key="3"/>
<comment type="function">
    <text evidence="2">Catalyzes the transformation of pimelate into pimeloyl-CoA with concomitant hydrolysis of ATP to AMP.</text>
</comment>
<comment type="catalytic activity">
    <reaction evidence="2">
        <text>heptanedioate + ATP + CoA = 6-carboxyhexanoyl-CoA + AMP + diphosphate</text>
        <dbReference type="Rhea" id="RHEA:14781"/>
        <dbReference type="ChEBI" id="CHEBI:30616"/>
        <dbReference type="ChEBI" id="CHEBI:33019"/>
        <dbReference type="ChEBI" id="CHEBI:36165"/>
        <dbReference type="ChEBI" id="CHEBI:57287"/>
        <dbReference type="ChEBI" id="CHEBI:57360"/>
        <dbReference type="ChEBI" id="CHEBI:456215"/>
        <dbReference type="EC" id="6.2.1.14"/>
    </reaction>
</comment>
<comment type="cofactor">
    <cofactor evidence="1">
        <name>Mg(2+)</name>
        <dbReference type="ChEBI" id="CHEBI:18420"/>
    </cofactor>
</comment>
<comment type="activity regulation">
    <text evidence="2">Inhibited by magnesium above 10 mM and metal chelators such as 1, 10-phenanthroline and EDTA.</text>
</comment>
<comment type="biophysicochemical properties">
    <kinetics>
        <KM evidence="2">33 uM for CoASH</KM>
        <KM evidence="2">145 uM for pimelate</KM>
        <KM evidence="2">170 uM for ATP</KM>
    </kinetics>
    <phDependence>
        <text evidence="2">Optimum pH is between 8.5 and 9.0.</text>
    </phDependence>
</comment>
<comment type="pathway">
    <text>Metabolic intermediate metabolism; pimeloyl-CoA biosynthesis; pimeloyl-CoA from pimelate: step 1/1.</text>
</comment>
<comment type="subunit">
    <text evidence="2">Homodimer.</text>
</comment>
<comment type="similarity">
    <text evidence="3">Belongs to the BioW family.</text>
</comment>
<proteinExistence type="evidence at protein level"/>
<gene>
    <name type="primary">bioW</name>
</gene>
<name>BIOW_LYSSH</name>
<accession>P22822</accession>
<protein>
    <recommendedName>
        <fullName>6-carboxyhexanoate--CoA ligase</fullName>
        <ecNumber>6.2.1.14</ecNumber>
    </recommendedName>
    <alternativeName>
        <fullName>Pimeloyl-CoA synthase</fullName>
    </alternativeName>
</protein>
<sequence>MLETCYSIRMRAAEKNLEGGEKHISGGERIGSEFQIEPIVKQLLNKARNHSRGDADFIQITVEKLTGDQILYMPPLEITTIDESSIERAHKEARSILTSVGVSKQAQNVAFHLLASNQNLRGAILLHSQTGLRLDNRGLKGVRVSRIDWQDADVGYNERVREALALATKVANSPYTIAELCWSDDPEYVTGYVSNHEIGYVRITPLKREGCESGGRIFFVSDEVELESYIHYLEREPILIRGHLK</sequence>
<dbReference type="EC" id="6.2.1.14"/>
<dbReference type="EMBL" id="M29291">
    <property type="protein sequence ID" value="AAA22270.1"/>
    <property type="molecule type" value="Genomic_DNA"/>
</dbReference>
<dbReference type="PIR" id="JQ0511">
    <property type="entry name" value="JQ0511"/>
</dbReference>
<dbReference type="RefSeq" id="WP_029747250.1">
    <property type="nucleotide sequence ID" value="NZ_UFSZ01000001.1"/>
</dbReference>
<dbReference type="SMR" id="P22822"/>
<dbReference type="GeneID" id="48278543"/>
<dbReference type="BioCyc" id="MetaCyc:MONOMER-14017"/>
<dbReference type="UniPathway" id="UPA00999">
    <property type="reaction ID" value="UER00351"/>
</dbReference>
<dbReference type="GO" id="GO:0042410">
    <property type="term" value="F:6-carboxyhexanoate-CoA ligase activity"/>
    <property type="evidence" value="ECO:0000314"/>
    <property type="project" value="UniProtKB"/>
</dbReference>
<dbReference type="GO" id="GO:0005524">
    <property type="term" value="F:ATP binding"/>
    <property type="evidence" value="ECO:0000314"/>
    <property type="project" value="UniProtKB"/>
</dbReference>
<dbReference type="GO" id="GO:0000287">
    <property type="term" value="F:magnesium ion binding"/>
    <property type="evidence" value="ECO:0007669"/>
    <property type="project" value="UniProtKB-UniRule"/>
</dbReference>
<dbReference type="GO" id="GO:0009102">
    <property type="term" value="P:biotin biosynthetic process"/>
    <property type="evidence" value="ECO:0000314"/>
    <property type="project" value="UniProtKB"/>
</dbReference>
<dbReference type="HAMAP" id="MF_00668">
    <property type="entry name" value="BioW"/>
    <property type="match status" value="1"/>
</dbReference>
<dbReference type="InterPro" id="IPR005499">
    <property type="entry name" value="BioW"/>
</dbReference>
<dbReference type="NCBIfam" id="TIGR01204">
    <property type="entry name" value="bioW"/>
    <property type="match status" value="1"/>
</dbReference>
<dbReference type="NCBIfam" id="NF002360">
    <property type="entry name" value="PRK01322.1"/>
    <property type="match status" value="1"/>
</dbReference>
<dbReference type="Pfam" id="PF03744">
    <property type="entry name" value="BioW"/>
    <property type="match status" value="1"/>
</dbReference>
<feature type="chain" id="PRO_0000191015" description="6-carboxyhexanoate--CoA ligase">
    <location>
        <begin position="1"/>
        <end position="245"/>
    </location>
</feature>
<feature type="sequence conflict" description="In Ref. 2; AA sequence." evidence="3" ref="2">
    <original>ET</original>
    <variation>I</variation>
    <location>
        <begin position="3"/>
        <end position="4"/>
    </location>
</feature>